<name>ACP_HERAR</name>
<organism>
    <name type="scientific">Herminiimonas arsenicoxydans</name>
    <dbReference type="NCBI Taxonomy" id="204773"/>
    <lineage>
        <taxon>Bacteria</taxon>
        <taxon>Pseudomonadati</taxon>
        <taxon>Pseudomonadota</taxon>
        <taxon>Betaproteobacteria</taxon>
        <taxon>Burkholderiales</taxon>
        <taxon>Oxalobacteraceae</taxon>
        <taxon>Herminiimonas</taxon>
    </lineage>
</organism>
<comment type="function">
    <text evidence="1">Carrier of the growing fatty acid chain in fatty acid biosynthesis.</text>
</comment>
<comment type="pathway">
    <text evidence="1">Lipid metabolism; fatty acid biosynthesis.</text>
</comment>
<comment type="subcellular location">
    <subcellularLocation>
        <location evidence="1">Cytoplasm</location>
    </subcellularLocation>
</comment>
<comment type="PTM">
    <text evidence="1">4'-phosphopantetheine is transferred from CoA to a specific serine of apo-ACP by AcpS. This modification is essential for activity because fatty acids are bound in thioester linkage to the sulfhydryl of the prosthetic group.</text>
</comment>
<comment type="similarity">
    <text evidence="1">Belongs to the acyl carrier protein (ACP) family.</text>
</comment>
<feature type="chain" id="PRO_1000066624" description="Acyl carrier protein">
    <location>
        <begin position="1"/>
        <end position="80"/>
    </location>
</feature>
<feature type="domain" description="Carrier" evidence="2">
    <location>
        <begin position="2"/>
        <end position="77"/>
    </location>
</feature>
<feature type="modified residue" description="O-(pantetheine 4'-phosphoryl)serine" evidence="2">
    <location>
        <position position="37"/>
    </location>
</feature>
<keyword id="KW-0963">Cytoplasm</keyword>
<keyword id="KW-0275">Fatty acid biosynthesis</keyword>
<keyword id="KW-0276">Fatty acid metabolism</keyword>
<keyword id="KW-0444">Lipid biosynthesis</keyword>
<keyword id="KW-0443">Lipid metabolism</keyword>
<keyword id="KW-0596">Phosphopantetheine</keyword>
<keyword id="KW-0597">Phosphoprotein</keyword>
<keyword id="KW-1185">Reference proteome</keyword>
<proteinExistence type="inferred from homology"/>
<accession>A4G6S9</accession>
<gene>
    <name evidence="1" type="primary">acpP</name>
    <name type="ordered locus">HEAR2074</name>
</gene>
<dbReference type="EMBL" id="CU207211">
    <property type="protein sequence ID" value="CAL62216.1"/>
    <property type="molecule type" value="Genomic_DNA"/>
</dbReference>
<dbReference type="SMR" id="A4G6S9"/>
<dbReference type="STRING" id="204773.HEAR2074"/>
<dbReference type="KEGG" id="har:HEAR2074"/>
<dbReference type="eggNOG" id="COG0236">
    <property type="taxonomic scope" value="Bacteria"/>
</dbReference>
<dbReference type="HOGENOM" id="CLU_108696_5_1_4"/>
<dbReference type="OrthoDB" id="9804551at2"/>
<dbReference type="UniPathway" id="UPA00094"/>
<dbReference type="Proteomes" id="UP000006697">
    <property type="component" value="Chromosome"/>
</dbReference>
<dbReference type="GO" id="GO:0005829">
    <property type="term" value="C:cytosol"/>
    <property type="evidence" value="ECO:0007669"/>
    <property type="project" value="TreeGrafter"/>
</dbReference>
<dbReference type="GO" id="GO:0016020">
    <property type="term" value="C:membrane"/>
    <property type="evidence" value="ECO:0007669"/>
    <property type="project" value="GOC"/>
</dbReference>
<dbReference type="GO" id="GO:0000035">
    <property type="term" value="F:acyl binding"/>
    <property type="evidence" value="ECO:0007669"/>
    <property type="project" value="TreeGrafter"/>
</dbReference>
<dbReference type="GO" id="GO:0000036">
    <property type="term" value="F:acyl carrier activity"/>
    <property type="evidence" value="ECO:0007669"/>
    <property type="project" value="UniProtKB-UniRule"/>
</dbReference>
<dbReference type="GO" id="GO:0009245">
    <property type="term" value="P:lipid A biosynthetic process"/>
    <property type="evidence" value="ECO:0007669"/>
    <property type="project" value="TreeGrafter"/>
</dbReference>
<dbReference type="FunFam" id="1.10.1200.10:FF:000001">
    <property type="entry name" value="Acyl carrier protein"/>
    <property type="match status" value="1"/>
</dbReference>
<dbReference type="Gene3D" id="1.10.1200.10">
    <property type="entry name" value="ACP-like"/>
    <property type="match status" value="1"/>
</dbReference>
<dbReference type="HAMAP" id="MF_01217">
    <property type="entry name" value="Acyl_carrier"/>
    <property type="match status" value="1"/>
</dbReference>
<dbReference type="InterPro" id="IPR003231">
    <property type="entry name" value="ACP"/>
</dbReference>
<dbReference type="InterPro" id="IPR036736">
    <property type="entry name" value="ACP-like_sf"/>
</dbReference>
<dbReference type="InterPro" id="IPR009081">
    <property type="entry name" value="PP-bd_ACP"/>
</dbReference>
<dbReference type="InterPro" id="IPR006162">
    <property type="entry name" value="Ppantetheine_attach_site"/>
</dbReference>
<dbReference type="NCBIfam" id="TIGR00517">
    <property type="entry name" value="acyl_carrier"/>
    <property type="match status" value="1"/>
</dbReference>
<dbReference type="NCBIfam" id="NF002148">
    <property type="entry name" value="PRK00982.1-2"/>
    <property type="match status" value="1"/>
</dbReference>
<dbReference type="NCBIfam" id="NF002149">
    <property type="entry name" value="PRK00982.1-3"/>
    <property type="match status" value="1"/>
</dbReference>
<dbReference type="NCBIfam" id="NF002150">
    <property type="entry name" value="PRK00982.1-4"/>
    <property type="match status" value="1"/>
</dbReference>
<dbReference type="NCBIfam" id="NF002151">
    <property type="entry name" value="PRK00982.1-5"/>
    <property type="match status" value="1"/>
</dbReference>
<dbReference type="PANTHER" id="PTHR20863">
    <property type="entry name" value="ACYL CARRIER PROTEIN"/>
    <property type="match status" value="1"/>
</dbReference>
<dbReference type="PANTHER" id="PTHR20863:SF76">
    <property type="entry name" value="CARRIER DOMAIN-CONTAINING PROTEIN"/>
    <property type="match status" value="1"/>
</dbReference>
<dbReference type="Pfam" id="PF00550">
    <property type="entry name" value="PP-binding"/>
    <property type="match status" value="1"/>
</dbReference>
<dbReference type="SUPFAM" id="SSF47336">
    <property type="entry name" value="ACP-like"/>
    <property type="match status" value="1"/>
</dbReference>
<dbReference type="PROSITE" id="PS50075">
    <property type="entry name" value="CARRIER"/>
    <property type="match status" value="1"/>
</dbReference>
<dbReference type="PROSITE" id="PS00012">
    <property type="entry name" value="PHOSPHOPANTETHEINE"/>
    <property type="match status" value="1"/>
</dbReference>
<evidence type="ECO:0000255" key="1">
    <source>
        <dbReference type="HAMAP-Rule" id="MF_01217"/>
    </source>
</evidence>
<evidence type="ECO:0000255" key="2">
    <source>
        <dbReference type="PROSITE-ProRule" id="PRU00258"/>
    </source>
</evidence>
<reference key="1">
    <citation type="journal article" date="2007" name="PLoS Genet.">
        <title>A tale of two oxidation states: bacterial colonization of arsenic-rich environments.</title>
        <authorList>
            <person name="Muller D."/>
            <person name="Medigue C."/>
            <person name="Koechler S."/>
            <person name="Barbe V."/>
            <person name="Barakat M."/>
            <person name="Talla E."/>
            <person name="Bonnefoy V."/>
            <person name="Krin E."/>
            <person name="Arsene-Ploetze F."/>
            <person name="Carapito C."/>
            <person name="Chandler M."/>
            <person name="Cournoyer B."/>
            <person name="Cruveiller S."/>
            <person name="Dossat C."/>
            <person name="Duval S."/>
            <person name="Heymann M."/>
            <person name="Leize E."/>
            <person name="Lieutaud A."/>
            <person name="Lievremont D."/>
            <person name="Makita Y."/>
            <person name="Mangenot S."/>
            <person name="Nitschke W."/>
            <person name="Ortet P."/>
            <person name="Perdrial N."/>
            <person name="Schoepp B."/>
            <person name="Siguier P."/>
            <person name="Simeonova D.D."/>
            <person name="Rouy Z."/>
            <person name="Segurens B."/>
            <person name="Turlin E."/>
            <person name="Vallenet D."/>
            <person name="van Dorsselaer A."/>
            <person name="Weiss S."/>
            <person name="Weissenbach J."/>
            <person name="Lett M.-C."/>
            <person name="Danchin A."/>
            <person name="Bertin P.N."/>
        </authorList>
    </citation>
    <scope>NUCLEOTIDE SEQUENCE [LARGE SCALE GENOMIC DNA]</scope>
    <source>
        <strain>ULPAs1</strain>
    </source>
</reference>
<protein>
    <recommendedName>
        <fullName evidence="1">Acyl carrier protein</fullName>
        <shortName evidence="1">ACP</shortName>
    </recommendedName>
</protein>
<sequence length="80" mass="8824">MSDIEQRVKKIVAEQLGVAEADIKIESSFVDDLGADSLDTVELVMALEDEFEMEIPDEQAEKITTVQQAIDYAKAHVKAA</sequence>